<evidence type="ECO:0000255" key="1">
    <source>
        <dbReference type="HAMAP-Rule" id="MF_00346"/>
    </source>
</evidence>
<dbReference type="EMBL" id="CP000305">
    <property type="protein sequence ID" value="ABG19437.1"/>
    <property type="molecule type" value="Genomic_DNA"/>
</dbReference>
<dbReference type="EMBL" id="ACNQ01000017">
    <property type="protein sequence ID" value="EEO75600.1"/>
    <property type="molecule type" value="Genomic_DNA"/>
</dbReference>
<dbReference type="RefSeq" id="WP_002209953.1">
    <property type="nucleotide sequence ID" value="NZ_ACNQ01000017.1"/>
</dbReference>
<dbReference type="SMR" id="Q1CEZ3"/>
<dbReference type="KEGG" id="ypn:YPN_3110"/>
<dbReference type="HOGENOM" id="CLU_085336_1_0_6"/>
<dbReference type="Proteomes" id="UP000008936">
    <property type="component" value="Chromosome"/>
</dbReference>
<dbReference type="GO" id="GO:0005829">
    <property type="term" value="C:cytosol"/>
    <property type="evidence" value="ECO:0007669"/>
    <property type="project" value="TreeGrafter"/>
</dbReference>
<dbReference type="FunFam" id="1.20.120.740:FF:000001">
    <property type="entry name" value="UPF0149 protein YgfB"/>
    <property type="match status" value="1"/>
</dbReference>
<dbReference type="Gene3D" id="1.20.120.740">
    <property type="entry name" value="YgfB uncharacterised protein family UPF0149, PF03695"/>
    <property type="match status" value="1"/>
</dbReference>
<dbReference type="HAMAP" id="MF_00346">
    <property type="entry name" value="UPF0149"/>
    <property type="match status" value="1"/>
</dbReference>
<dbReference type="InterPro" id="IPR011978">
    <property type="entry name" value="YgfB-like"/>
</dbReference>
<dbReference type="InterPro" id="IPR036255">
    <property type="entry name" value="YgfB-like_sf"/>
</dbReference>
<dbReference type="NCBIfam" id="NF002477">
    <property type="entry name" value="PRK01736.1"/>
    <property type="match status" value="1"/>
</dbReference>
<dbReference type="NCBIfam" id="TIGR02292">
    <property type="entry name" value="ygfB_yecA"/>
    <property type="match status" value="1"/>
</dbReference>
<dbReference type="PANTHER" id="PTHR37528">
    <property type="entry name" value="UPF0149 PROTEIN YGFB"/>
    <property type="match status" value="1"/>
</dbReference>
<dbReference type="PANTHER" id="PTHR37528:SF1">
    <property type="entry name" value="UPF0149 PROTEIN YGFB"/>
    <property type="match status" value="1"/>
</dbReference>
<dbReference type="Pfam" id="PF03695">
    <property type="entry name" value="UPF0149"/>
    <property type="match status" value="1"/>
</dbReference>
<dbReference type="SUPFAM" id="SSF101327">
    <property type="entry name" value="YgfB-like"/>
    <property type="match status" value="1"/>
</dbReference>
<accession>Q1CEZ3</accession>
<accession>C4GXF0</accession>
<feature type="chain" id="PRO_1000013056" description="UPF0149 protein YPN_3110">
    <location>
        <begin position="1"/>
        <end position="192"/>
    </location>
</feature>
<comment type="similarity">
    <text evidence="1">Belongs to the UPF0149 family.</text>
</comment>
<gene>
    <name type="ordered locus">YPN_3110</name>
    <name type="ORF">YP516_3529</name>
</gene>
<organism>
    <name type="scientific">Yersinia pestis bv. Antiqua (strain Nepal516)</name>
    <dbReference type="NCBI Taxonomy" id="377628"/>
    <lineage>
        <taxon>Bacteria</taxon>
        <taxon>Pseudomonadati</taxon>
        <taxon>Pseudomonadota</taxon>
        <taxon>Gammaproteobacteria</taxon>
        <taxon>Enterobacterales</taxon>
        <taxon>Yersiniaceae</taxon>
        <taxon>Yersinia</taxon>
    </lineage>
</organism>
<reference key="1">
    <citation type="journal article" date="2006" name="J. Bacteriol.">
        <title>Complete genome sequence of Yersinia pestis strains Antiqua and Nepal516: evidence of gene reduction in an emerging pathogen.</title>
        <authorList>
            <person name="Chain P.S.G."/>
            <person name="Hu P."/>
            <person name="Malfatti S.A."/>
            <person name="Radnedge L."/>
            <person name="Larimer F."/>
            <person name="Vergez L.M."/>
            <person name="Worsham P."/>
            <person name="Chu M.C."/>
            <person name="Andersen G.L."/>
        </authorList>
    </citation>
    <scope>NUCLEOTIDE SEQUENCE [LARGE SCALE GENOMIC DNA]</scope>
    <source>
        <strain>Nepal516</strain>
    </source>
</reference>
<reference key="2">
    <citation type="submission" date="2009-04" db="EMBL/GenBank/DDBJ databases">
        <title>Yersinia pestis Nepal516A whole genome shotgun sequencing project.</title>
        <authorList>
            <person name="Plunkett G. III"/>
            <person name="Anderson B.D."/>
            <person name="Baumler D.J."/>
            <person name="Burland V."/>
            <person name="Cabot E.L."/>
            <person name="Glasner J.D."/>
            <person name="Mau B."/>
            <person name="Neeno-Eckwall E."/>
            <person name="Perna N.T."/>
            <person name="Munk A.C."/>
            <person name="Tapia R."/>
            <person name="Green L.D."/>
            <person name="Rogers Y.C."/>
            <person name="Detter J.C."/>
            <person name="Bruce D.C."/>
            <person name="Brettin T.S."/>
        </authorList>
    </citation>
    <scope>NUCLEOTIDE SEQUENCE [LARGE SCALE GENOMIC DNA]</scope>
    <source>
        <strain>Nepal516</strain>
    </source>
</reference>
<proteinExistence type="inferred from homology"/>
<sequence>MSIENTLPTYPSLALALSQQAVALTPAEMHGLISGMLCGGSKDNGWQTLVHDLTNEGVAFPQALSLPLQQLHEATQEALENEGFMFQLLIPEGEDVTVFDRADALSGWVNHFLLGLGMLQPKLAQVKDEVGEAIDDLRNIAQLGYDEDEDQEELAQSLEEVVEYVRVAAILCHIEFTQQKPTAPEMHKPTLH</sequence>
<name>Y3110_YERPN</name>
<protein>
    <recommendedName>
        <fullName evidence="1">UPF0149 protein YPN_3110</fullName>
    </recommendedName>
</protein>